<proteinExistence type="inferred from homology"/>
<gene>
    <name type="primary">ydgT</name>
    <name type="synonym">cnu</name>
    <name type="ordered locus">SPA1392</name>
</gene>
<feature type="chain" id="PRO_0000201736" description="Transcription modulator YdgT">
    <location>
        <begin position="1"/>
        <end position="71"/>
    </location>
</feature>
<feature type="site" description="Interacts with H-NS" evidence="1">
    <location>
        <position position="44"/>
    </location>
</feature>
<dbReference type="EMBL" id="CP000026">
    <property type="protein sequence ID" value="AAV77333.1"/>
    <property type="molecule type" value="Genomic_DNA"/>
</dbReference>
<dbReference type="RefSeq" id="WP_000217946.1">
    <property type="nucleotide sequence ID" value="NC_006511.1"/>
</dbReference>
<dbReference type="SMR" id="Q5PIC3"/>
<dbReference type="GeneID" id="66755902"/>
<dbReference type="KEGG" id="spt:SPA1392"/>
<dbReference type="HOGENOM" id="CLU_190629_0_0_6"/>
<dbReference type="Proteomes" id="UP000008185">
    <property type="component" value="Chromosome"/>
</dbReference>
<dbReference type="GO" id="GO:0003677">
    <property type="term" value="F:DNA binding"/>
    <property type="evidence" value="ECO:0007669"/>
    <property type="project" value="UniProtKB-KW"/>
</dbReference>
<dbReference type="Gene3D" id="1.20.1280.40">
    <property type="entry name" value="HHA"/>
    <property type="match status" value="1"/>
</dbReference>
<dbReference type="InterPro" id="IPR007985">
    <property type="entry name" value="Hemolysn_expr_modulating_HHA"/>
</dbReference>
<dbReference type="InterPro" id="IPR036666">
    <property type="entry name" value="HHA_sf"/>
</dbReference>
<dbReference type="NCBIfam" id="NF007703">
    <property type="entry name" value="PRK10391.1"/>
    <property type="match status" value="1"/>
</dbReference>
<dbReference type="Pfam" id="PF05321">
    <property type="entry name" value="HHA"/>
    <property type="match status" value="1"/>
</dbReference>
<dbReference type="SUPFAM" id="SSF68989">
    <property type="entry name" value="Hemolysin expression modulating protein HHA"/>
    <property type="match status" value="1"/>
</dbReference>
<organism>
    <name type="scientific">Salmonella paratyphi A (strain ATCC 9150 / SARB42)</name>
    <dbReference type="NCBI Taxonomy" id="295319"/>
    <lineage>
        <taxon>Bacteria</taxon>
        <taxon>Pseudomonadati</taxon>
        <taxon>Pseudomonadota</taxon>
        <taxon>Gammaproteobacteria</taxon>
        <taxon>Enterobacterales</taxon>
        <taxon>Enterobacteriaceae</taxon>
        <taxon>Salmonella</taxon>
    </lineage>
</organism>
<reference key="1">
    <citation type="journal article" date="2004" name="Nat. Genet.">
        <title>Comparison of genome degradation in Paratyphi A and Typhi, human-restricted serovars of Salmonella enterica that cause typhoid.</title>
        <authorList>
            <person name="McClelland M."/>
            <person name="Sanderson K.E."/>
            <person name="Clifton S.W."/>
            <person name="Latreille P."/>
            <person name="Porwollik S."/>
            <person name="Sabo A."/>
            <person name="Meyer R."/>
            <person name="Bieri T."/>
            <person name="Ozersky P."/>
            <person name="McLellan M."/>
            <person name="Harkins C.R."/>
            <person name="Wang C."/>
            <person name="Nguyen C."/>
            <person name="Berghoff A."/>
            <person name="Elliott G."/>
            <person name="Kohlberg S."/>
            <person name="Strong C."/>
            <person name="Du F."/>
            <person name="Carter J."/>
            <person name="Kremizki C."/>
            <person name="Layman D."/>
            <person name="Leonard S."/>
            <person name="Sun H."/>
            <person name="Fulton L."/>
            <person name="Nash W."/>
            <person name="Miner T."/>
            <person name="Minx P."/>
            <person name="Delehaunty K."/>
            <person name="Fronick C."/>
            <person name="Magrini V."/>
            <person name="Nhan M."/>
            <person name="Warren W."/>
            <person name="Florea L."/>
            <person name="Spieth J."/>
            <person name="Wilson R.K."/>
        </authorList>
    </citation>
    <scope>NUCLEOTIDE SEQUENCE [LARGE SCALE GENOMIC DNA]</scope>
    <source>
        <strain>ATCC 9150 / SARB42</strain>
    </source>
</reference>
<name>YDGT_SALPA</name>
<sequence length="71" mass="8381">MTVQDYLLKFRKISSLESLEKLFDHLNYTLTDDMDIVNMYRAADHRRAELVSGGRLFDVGQVPQSVWRYVQ</sequence>
<accession>Q5PIC3</accession>
<keyword id="KW-0238">DNA-binding</keyword>
<keyword id="KW-0804">Transcription</keyword>
<keyword id="KW-0805">Transcription regulation</keyword>
<protein>
    <recommendedName>
        <fullName>Transcription modulator YdgT</fullName>
    </recommendedName>
    <alternativeName>
        <fullName>H-NS/StpA-binding protein 2</fullName>
    </alternativeName>
    <alternativeName>
        <fullName>OriC-binding nucleoid-associated protein</fullName>
    </alternativeName>
</protein>
<comment type="function">
    <text evidence="2 3">Binds to H-NS and modified the range of genes it silences; H-NS alonge silences core gene while the H-NS-Hha complex (and presumably also H-NS-YdgT) silences genes acquired by horizontal gene transfer. Plays a role silencing virulence factors in the absence of factors that induce pathogenicity (By similarity). The complex formed with H-NS binds to the specific 26-bp cnb site in the origin of replication oriC (By similarity).</text>
</comment>
<comment type="subunit">
    <text evidence="4">Forms complexes with both H-NS and StpA.</text>
</comment>
<comment type="similarity">
    <text evidence="5">Belongs to the Hha/YmoA/Cnu family.</text>
</comment>
<evidence type="ECO:0000250" key="1"/>
<evidence type="ECO:0000250" key="2">
    <source>
        <dbReference type="UniProtKB" id="A0A0H3NGF1"/>
    </source>
</evidence>
<evidence type="ECO:0000250" key="3">
    <source>
        <dbReference type="UniProtKB" id="P64467"/>
    </source>
</evidence>
<evidence type="ECO:0000250" key="4">
    <source>
        <dbReference type="UniProtKB" id="Q7CQK5"/>
    </source>
</evidence>
<evidence type="ECO:0000305" key="5"/>